<organism>
    <name type="scientific">Dehalococcoides mccartyi (strain ATCC BAA-2266 / KCTC 15142 / 195)</name>
    <name type="common">Dehalococcoides ethenogenes (strain 195)</name>
    <dbReference type="NCBI Taxonomy" id="243164"/>
    <lineage>
        <taxon>Bacteria</taxon>
        <taxon>Bacillati</taxon>
        <taxon>Chloroflexota</taxon>
        <taxon>Dehalococcoidia</taxon>
        <taxon>Dehalococcoidales</taxon>
        <taxon>Dehalococcoidaceae</taxon>
        <taxon>Dehalococcoides</taxon>
    </lineage>
</organism>
<evidence type="ECO:0000255" key="1">
    <source>
        <dbReference type="HAMAP-Rule" id="MF_00376"/>
    </source>
</evidence>
<dbReference type="EC" id="2.7.1.24" evidence="1"/>
<dbReference type="EMBL" id="CP000027">
    <property type="protein sequence ID" value="AAW39462.1"/>
    <property type="molecule type" value="Genomic_DNA"/>
</dbReference>
<dbReference type="RefSeq" id="WP_010937011.1">
    <property type="nucleotide sequence ID" value="NC_002936.3"/>
</dbReference>
<dbReference type="SMR" id="Q3Z6W5"/>
<dbReference type="FunCoup" id="Q3Z6W5">
    <property type="interactions" value="300"/>
</dbReference>
<dbReference type="STRING" id="243164.DET1323"/>
<dbReference type="GeneID" id="3229422"/>
<dbReference type="KEGG" id="det:DET1323"/>
<dbReference type="PATRIC" id="fig|243164.10.peg.1252"/>
<dbReference type="eggNOG" id="COG0237">
    <property type="taxonomic scope" value="Bacteria"/>
</dbReference>
<dbReference type="HOGENOM" id="CLU_057180_1_1_0"/>
<dbReference type="InParanoid" id="Q3Z6W5"/>
<dbReference type="UniPathway" id="UPA00241">
    <property type="reaction ID" value="UER00356"/>
</dbReference>
<dbReference type="Proteomes" id="UP000008289">
    <property type="component" value="Chromosome"/>
</dbReference>
<dbReference type="GO" id="GO:0005737">
    <property type="term" value="C:cytoplasm"/>
    <property type="evidence" value="ECO:0007669"/>
    <property type="project" value="UniProtKB-SubCell"/>
</dbReference>
<dbReference type="GO" id="GO:0005524">
    <property type="term" value="F:ATP binding"/>
    <property type="evidence" value="ECO:0007669"/>
    <property type="project" value="UniProtKB-UniRule"/>
</dbReference>
<dbReference type="GO" id="GO:0004140">
    <property type="term" value="F:dephospho-CoA kinase activity"/>
    <property type="evidence" value="ECO:0007669"/>
    <property type="project" value="UniProtKB-UniRule"/>
</dbReference>
<dbReference type="GO" id="GO:0015937">
    <property type="term" value="P:coenzyme A biosynthetic process"/>
    <property type="evidence" value="ECO:0007669"/>
    <property type="project" value="UniProtKB-UniRule"/>
</dbReference>
<dbReference type="CDD" id="cd02022">
    <property type="entry name" value="DPCK"/>
    <property type="match status" value="1"/>
</dbReference>
<dbReference type="Gene3D" id="3.40.50.300">
    <property type="entry name" value="P-loop containing nucleotide triphosphate hydrolases"/>
    <property type="match status" value="1"/>
</dbReference>
<dbReference type="HAMAP" id="MF_00376">
    <property type="entry name" value="Dephospho_CoA_kinase"/>
    <property type="match status" value="1"/>
</dbReference>
<dbReference type="InterPro" id="IPR001977">
    <property type="entry name" value="Depp_CoAkinase"/>
</dbReference>
<dbReference type="InterPro" id="IPR027417">
    <property type="entry name" value="P-loop_NTPase"/>
</dbReference>
<dbReference type="NCBIfam" id="TIGR00152">
    <property type="entry name" value="dephospho-CoA kinase"/>
    <property type="match status" value="1"/>
</dbReference>
<dbReference type="PANTHER" id="PTHR10695:SF46">
    <property type="entry name" value="BIFUNCTIONAL COENZYME A SYNTHASE-RELATED"/>
    <property type="match status" value="1"/>
</dbReference>
<dbReference type="PANTHER" id="PTHR10695">
    <property type="entry name" value="DEPHOSPHO-COA KINASE-RELATED"/>
    <property type="match status" value="1"/>
</dbReference>
<dbReference type="Pfam" id="PF01121">
    <property type="entry name" value="CoaE"/>
    <property type="match status" value="1"/>
</dbReference>
<dbReference type="SUPFAM" id="SSF52540">
    <property type="entry name" value="P-loop containing nucleoside triphosphate hydrolases"/>
    <property type="match status" value="1"/>
</dbReference>
<dbReference type="PROSITE" id="PS51219">
    <property type="entry name" value="DPCK"/>
    <property type="match status" value="1"/>
</dbReference>
<gene>
    <name evidence="1" type="primary">coaE</name>
    <name type="ordered locus">DET1323</name>
</gene>
<accession>Q3Z6W5</accession>
<name>COAE_DEHM1</name>
<proteinExistence type="inferred from homology"/>
<sequence length="198" mass="22320">MKIVGITGGIGSGKTTVCRYLKELGVNIIDADEIGHRVLQNKGIRTRITDVFGNEVMNPDGSINRKILGELVFGYPERLEHLNKITHPLIEQAIASLLEEYRQKGIKAVAIEAPLLVEAGWLKLVNEVWLITAPKESIFKRLRNRMGLSREQVMARIQSQATDNERLKYASIVINNNCRFEDLKSCVQLLAKERLELA</sequence>
<keyword id="KW-0067">ATP-binding</keyword>
<keyword id="KW-0173">Coenzyme A biosynthesis</keyword>
<keyword id="KW-0963">Cytoplasm</keyword>
<keyword id="KW-0418">Kinase</keyword>
<keyword id="KW-0547">Nucleotide-binding</keyword>
<keyword id="KW-0808">Transferase</keyword>
<comment type="function">
    <text evidence="1">Catalyzes the phosphorylation of the 3'-hydroxyl group of dephosphocoenzyme A to form coenzyme A.</text>
</comment>
<comment type="catalytic activity">
    <reaction evidence="1">
        <text>3'-dephospho-CoA + ATP = ADP + CoA + H(+)</text>
        <dbReference type="Rhea" id="RHEA:18245"/>
        <dbReference type="ChEBI" id="CHEBI:15378"/>
        <dbReference type="ChEBI" id="CHEBI:30616"/>
        <dbReference type="ChEBI" id="CHEBI:57287"/>
        <dbReference type="ChEBI" id="CHEBI:57328"/>
        <dbReference type="ChEBI" id="CHEBI:456216"/>
        <dbReference type="EC" id="2.7.1.24"/>
    </reaction>
</comment>
<comment type="pathway">
    <text evidence="1">Cofactor biosynthesis; coenzyme A biosynthesis; CoA from (R)-pantothenate: step 5/5.</text>
</comment>
<comment type="subcellular location">
    <subcellularLocation>
        <location evidence="1">Cytoplasm</location>
    </subcellularLocation>
</comment>
<comment type="similarity">
    <text evidence="1">Belongs to the CoaE family.</text>
</comment>
<protein>
    <recommendedName>
        <fullName evidence="1">Dephospho-CoA kinase</fullName>
        <ecNumber evidence="1">2.7.1.24</ecNumber>
    </recommendedName>
    <alternativeName>
        <fullName evidence="1">Dephosphocoenzyme A kinase</fullName>
    </alternativeName>
</protein>
<feature type="chain" id="PRO_0000243280" description="Dephospho-CoA kinase">
    <location>
        <begin position="1"/>
        <end position="198"/>
    </location>
</feature>
<feature type="domain" description="DPCK" evidence="1">
    <location>
        <begin position="3"/>
        <end position="198"/>
    </location>
</feature>
<feature type="binding site" evidence="1">
    <location>
        <begin position="11"/>
        <end position="16"/>
    </location>
    <ligand>
        <name>ATP</name>
        <dbReference type="ChEBI" id="CHEBI:30616"/>
    </ligand>
</feature>
<reference key="1">
    <citation type="journal article" date="2005" name="Science">
        <title>Genome sequence of the PCE-dechlorinating bacterium Dehalococcoides ethenogenes.</title>
        <authorList>
            <person name="Seshadri R."/>
            <person name="Adrian L."/>
            <person name="Fouts D.E."/>
            <person name="Eisen J.A."/>
            <person name="Phillippy A.M."/>
            <person name="Methe B.A."/>
            <person name="Ward N.L."/>
            <person name="Nelson W.C."/>
            <person name="DeBoy R.T."/>
            <person name="Khouri H.M."/>
            <person name="Kolonay J.F."/>
            <person name="Dodson R.J."/>
            <person name="Daugherty S.C."/>
            <person name="Brinkac L.M."/>
            <person name="Sullivan S.A."/>
            <person name="Madupu R."/>
            <person name="Nelson K.E."/>
            <person name="Kang K.H."/>
            <person name="Impraim M."/>
            <person name="Tran K."/>
            <person name="Robinson J.M."/>
            <person name="Forberger H.A."/>
            <person name="Fraser C.M."/>
            <person name="Zinder S.H."/>
            <person name="Heidelberg J.F."/>
        </authorList>
    </citation>
    <scope>NUCLEOTIDE SEQUENCE [LARGE SCALE GENOMIC DNA]</scope>
    <source>
        <strain>ATCC BAA-2266 / KCTC 15142 / 195</strain>
    </source>
</reference>